<proteinExistence type="inferred from homology"/>
<sequence length="313" mass="35477">MVIGNRVLLPLTKRYYNARYRKVLHPELREEIIAHNCYCEEVNSKLHFDDEKIDPGISLKTAVPSYDKHVMLISDINRGMAKKPGVWKNIWESRIENNTTHPYDIISKLNFGPGVLFNAISITSSLESFAPTSLEFYDFLVMPDMRYYRVKKPDIEKFSQYINSGHAVAPKLSFSDYLSGKAAATTVSNNNQITLSLDDSIYYRELKNDAWLFVCGHEKRDMRCGIMGPEILHSVNTANSKPLVNNTGIISHIGGHKFAGNILIYKPIENQNGRKKVDSLWFGKVTPFNVSEIVQSVNEGVIIENNFRGGLSL</sequence>
<organism>
    <name type="scientific">Candida glabrata (strain ATCC 2001 / BCRC 20586 / JCM 3761 / NBRC 0622 / NRRL Y-65 / CBS 138)</name>
    <name type="common">Yeast</name>
    <name type="synonym">Nakaseomyces glabratus</name>
    <dbReference type="NCBI Taxonomy" id="284593"/>
    <lineage>
        <taxon>Eukaryota</taxon>
        <taxon>Fungi</taxon>
        <taxon>Dikarya</taxon>
        <taxon>Ascomycota</taxon>
        <taxon>Saccharomycotina</taxon>
        <taxon>Saccharomycetes</taxon>
        <taxon>Saccharomycetales</taxon>
        <taxon>Saccharomycetaceae</taxon>
        <taxon>Nakaseomyces</taxon>
    </lineage>
</organism>
<feature type="chain" id="PRO_0000399694" description="Altered inheritance of mitochondria protein 32">
    <location>
        <begin position="1"/>
        <end position="313"/>
    </location>
</feature>
<gene>
    <name type="primary">AIM32</name>
    <name type="ordered locus">CAGL0L01529g</name>
</gene>
<accession>Q6FLQ5</accession>
<name>AIM32_CANGA</name>
<protein>
    <recommendedName>
        <fullName>Altered inheritance of mitochondria protein 32</fullName>
    </recommendedName>
</protein>
<dbReference type="EMBL" id="CR380958">
    <property type="protein sequence ID" value="CAG61809.1"/>
    <property type="molecule type" value="Genomic_DNA"/>
</dbReference>
<dbReference type="RefSeq" id="XP_448839.1">
    <property type="nucleotide sequence ID" value="XM_448839.1"/>
</dbReference>
<dbReference type="SMR" id="Q6FLQ5"/>
<dbReference type="FunCoup" id="Q6FLQ5">
    <property type="interactions" value="28"/>
</dbReference>
<dbReference type="STRING" id="284593.Q6FLQ5"/>
<dbReference type="EnsemblFungi" id="CAGL0L01529g-T">
    <property type="protein sequence ID" value="CAGL0L01529g-T-p1"/>
    <property type="gene ID" value="CAGL0L01529g"/>
</dbReference>
<dbReference type="KEGG" id="cgr:2890881"/>
<dbReference type="CGD" id="CAL0135706">
    <property type="gene designation" value="CAGL0L01529g"/>
</dbReference>
<dbReference type="VEuPathDB" id="FungiDB:CAGL0L01529g"/>
<dbReference type="eggNOG" id="ENOG502QS3W">
    <property type="taxonomic scope" value="Eukaryota"/>
</dbReference>
<dbReference type="HOGENOM" id="CLU_044499_1_0_1"/>
<dbReference type="InParanoid" id="Q6FLQ5"/>
<dbReference type="OMA" id="IPEMKIY"/>
<dbReference type="Proteomes" id="UP000002428">
    <property type="component" value="Chromosome L"/>
</dbReference>
<dbReference type="GO" id="GO:0005758">
    <property type="term" value="C:mitochondrial intermembrane space"/>
    <property type="evidence" value="ECO:0007669"/>
    <property type="project" value="EnsemblFungi"/>
</dbReference>
<dbReference type="GO" id="GO:0005759">
    <property type="term" value="C:mitochondrial matrix"/>
    <property type="evidence" value="ECO:0007669"/>
    <property type="project" value="EnsemblFungi"/>
</dbReference>
<dbReference type="GO" id="GO:0045454">
    <property type="term" value="P:cell redox homeostasis"/>
    <property type="evidence" value="ECO:0007669"/>
    <property type="project" value="EnsemblFungi"/>
</dbReference>
<dbReference type="GO" id="GO:0065003">
    <property type="term" value="P:protein-containing complex assembly"/>
    <property type="evidence" value="ECO:0007669"/>
    <property type="project" value="EnsemblFungi"/>
</dbReference>
<dbReference type="CDD" id="cd03062">
    <property type="entry name" value="TRX_Fd_Sucrase"/>
    <property type="match status" value="1"/>
</dbReference>
<dbReference type="Gene3D" id="3.40.30.10">
    <property type="entry name" value="Glutaredoxin"/>
    <property type="match status" value="1"/>
</dbReference>
<dbReference type="InterPro" id="IPR009737">
    <property type="entry name" value="Aim32/Apd1-like"/>
</dbReference>
<dbReference type="InterPro" id="IPR036249">
    <property type="entry name" value="Thioredoxin-like_sf"/>
</dbReference>
<dbReference type="PANTHER" id="PTHR31902">
    <property type="entry name" value="ACTIN PATCHES DISTAL PROTEIN 1"/>
    <property type="match status" value="1"/>
</dbReference>
<dbReference type="PANTHER" id="PTHR31902:SF7">
    <property type="entry name" value="ALTERED INHERITANCE OF MITOCHONDRIA PROTEIN 32"/>
    <property type="match status" value="1"/>
</dbReference>
<dbReference type="Pfam" id="PF06999">
    <property type="entry name" value="Suc_Fer-like"/>
    <property type="match status" value="1"/>
</dbReference>
<dbReference type="SUPFAM" id="SSF52833">
    <property type="entry name" value="Thioredoxin-like"/>
    <property type="match status" value="1"/>
</dbReference>
<keyword id="KW-1185">Reference proteome</keyword>
<comment type="similarity">
    <text evidence="1">Belongs to the AIM32 family.</text>
</comment>
<reference key="1">
    <citation type="journal article" date="2004" name="Nature">
        <title>Genome evolution in yeasts.</title>
        <authorList>
            <person name="Dujon B."/>
            <person name="Sherman D."/>
            <person name="Fischer G."/>
            <person name="Durrens P."/>
            <person name="Casaregola S."/>
            <person name="Lafontaine I."/>
            <person name="de Montigny J."/>
            <person name="Marck C."/>
            <person name="Neuveglise C."/>
            <person name="Talla E."/>
            <person name="Goffard N."/>
            <person name="Frangeul L."/>
            <person name="Aigle M."/>
            <person name="Anthouard V."/>
            <person name="Babour A."/>
            <person name="Barbe V."/>
            <person name="Barnay S."/>
            <person name="Blanchin S."/>
            <person name="Beckerich J.-M."/>
            <person name="Beyne E."/>
            <person name="Bleykasten C."/>
            <person name="Boisrame A."/>
            <person name="Boyer J."/>
            <person name="Cattolico L."/>
            <person name="Confanioleri F."/>
            <person name="de Daruvar A."/>
            <person name="Despons L."/>
            <person name="Fabre E."/>
            <person name="Fairhead C."/>
            <person name="Ferry-Dumazet H."/>
            <person name="Groppi A."/>
            <person name="Hantraye F."/>
            <person name="Hennequin C."/>
            <person name="Jauniaux N."/>
            <person name="Joyet P."/>
            <person name="Kachouri R."/>
            <person name="Kerrest A."/>
            <person name="Koszul R."/>
            <person name="Lemaire M."/>
            <person name="Lesur I."/>
            <person name="Ma L."/>
            <person name="Muller H."/>
            <person name="Nicaud J.-M."/>
            <person name="Nikolski M."/>
            <person name="Oztas S."/>
            <person name="Ozier-Kalogeropoulos O."/>
            <person name="Pellenz S."/>
            <person name="Potier S."/>
            <person name="Richard G.-F."/>
            <person name="Straub M.-L."/>
            <person name="Suleau A."/>
            <person name="Swennen D."/>
            <person name="Tekaia F."/>
            <person name="Wesolowski-Louvel M."/>
            <person name="Westhof E."/>
            <person name="Wirth B."/>
            <person name="Zeniou-Meyer M."/>
            <person name="Zivanovic Y."/>
            <person name="Bolotin-Fukuhara M."/>
            <person name="Thierry A."/>
            <person name="Bouchier C."/>
            <person name="Caudron B."/>
            <person name="Scarpelli C."/>
            <person name="Gaillardin C."/>
            <person name="Weissenbach J."/>
            <person name="Wincker P."/>
            <person name="Souciet J.-L."/>
        </authorList>
    </citation>
    <scope>NUCLEOTIDE SEQUENCE [LARGE SCALE GENOMIC DNA]</scope>
    <source>
        <strain>ATCC 2001 / BCRC 20586 / JCM 3761 / NBRC 0622 / NRRL Y-65 / CBS 138</strain>
    </source>
</reference>
<evidence type="ECO:0000305" key="1"/>